<dbReference type="EMBL" id="Z72577">
    <property type="protein sequence ID" value="CAA96758.1"/>
    <property type="molecule type" value="Genomic_DNA"/>
</dbReference>
<dbReference type="EMBL" id="Z72578">
    <property type="protein sequence ID" value="CAA96759.1"/>
    <property type="molecule type" value="Genomic_DNA"/>
</dbReference>
<dbReference type="EMBL" id="AY693013">
    <property type="protein sequence ID" value="AAT93032.1"/>
    <property type="molecule type" value="Genomic_DNA"/>
</dbReference>
<dbReference type="EMBL" id="BK006941">
    <property type="protein sequence ID" value="DAA08046.2"/>
    <property type="molecule type" value="Genomic_DNA"/>
</dbReference>
<dbReference type="PIR" id="S64060">
    <property type="entry name" value="S64060"/>
</dbReference>
<dbReference type="RefSeq" id="NP_011459.2">
    <property type="nucleotide sequence ID" value="NM_001180921.2"/>
</dbReference>
<dbReference type="SMR" id="P53172"/>
<dbReference type="BioGRID" id="33191">
    <property type="interactions" value="113"/>
</dbReference>
<dbReference type="FunCoup" id="P53172">
    <property type="interactions" value="122"/>
</dbReference>
<dbReference type="IntAct" id="P53172">
    <property type="interactions" value="24"/>
</dbReference>
<dbReference type="MINT" id="P53172"/>
<dbReference type="STRING" id="4932.YGL056C"/>
<dbReference type="GlyGen" id="P53172">
    <property type="glycosylation" value="2 sites"/>
</dbReference>
<dbReference type="iPTMnet" id="P53172"/>
<dbReference type="PaxDb" id="4932-YGL056C"/>
<dbReference type="PeptideAtlas" id="P53172"/>
<dbReference type="EnsemblFungi" id="YGL056C_mRNA">
    <property type="protein sequence ID" value="YGL056C"/>
    <property type="gene ID" value="YGL056C"/>
</dbReference>
<dbReference type="GeneID" id="852824"/>
<dbReference type="KEGG" id="sce:YGL056C"/>
<dbReference type="AGR" id="SGD:S000003024"/>
<dbReference type="SGD" id="S000003024">
    <property type="gene designation" value="SDS23"/>
</dbReference>
<dbReference type="VEuPathDB" id="FungiDB:YGL056C"/>
<dbReference type="eggNOG" id="KOG1764">
    <property type="taxonomic scope" value="Eukaryota"/>
</dbReference>
<dbReference type="GeneTree" id="ENSGT00950000183019"/>
<dbReference type="HOGENOM" id="CLU_024459_1_1_1"/>
<dbReference type="InParanoid" id="P53172"/>
<dbReference type="OMA" id="MAPTNLC"/>
<dbReference type="OrthoDB" id="449052at2759"/>
<dbReference type="BioCyc" id="YEAST:G3O-30564-MONOMER"/>
<dbReference type="BioGRID-ORCS" id="852824">
    <property type="hits" value="0 hits in 10 CRISPR screens"/>
</dbReference>
<dbReference type="PRO" id="PR:P53172"/>
<dbReference type="Proteomes" id="UP000002311">
    <property type="component" value="Chromosome VII"/>
</dbReference>
<dbReference type="RNAct" id="P53172">
    <property type="molecule type" value="protein"/>
</dbReference>
<dbReference type="GO" id="GO:0005737">
    <property type="term" value="C:cytoplasm"/>
    <property type="evidence" value="ECO:0007005"/>
    <property type="project" value="SGD"/>
</dbReference>
<dbReference type="GO" id="GO:0005634">
    <property type="term" value="C:nucleus"/>
    <property type="evidence" value="ECO:0007005"/>
    <property type="project" value="SGD"/>
</dbReference>
<dbReference type="GO" id="GO:0004865">
    <property type="term" value="F:protein serine/threonine phosphatase inhibitor activity"/>
    <property type="evidence" value="ECO:0000318"/>
    <property type="project" value="GO_Central"/>
</dbReference>
<dbReference type="GO" id="GO:0042149">
    <property type="term" value="P:cellular response to glucose starvation"/>
    <property type="evidence" value="ECO:0000318"/>
    <property type="project" value="GO_Central"/>
</dbReference>
<dbReference type="GO" id="GO:0030071">
    <property type="term" value="P:regulation of mitotic metaphase/anaphase transition"/>
    <property type="evidence" value="ECO:0007669"/>
    <property type="project" value="InterPro"/>
</dbReference>
<dbReference type="GO" id="GO:0000920">
    <property type="term" value="P:septum digestion after cytokinesis"/>
    <property type="evidence" value="ECO:0000316"/>
    <property type="project" value="SGD"/>
</dbReference>
<dbReference type="FunFam" id="3.10.580.10:FF:000035">
    <property type="entry name" value="Protein SDS23"/>
    <property type="match status" value="1"/>
</dbReference>
<dbReference type="FunFam" id="3.10.580.10:FF:000043">
    <property type="entry name" value="Sds23p"/>
    <property type="match status" value="1"/>
</dbReference>
<dbReference type="Gene3D" id="3.10.580.10">
    <property type="entry name" value="CBS-domain"/>
    <property type="match status" value="2"/>
</dbReference>
<dbReference type="InterPro" id="IPR050511">
    <property type="entry name" value="AMPK_gamma/SDS23_families"/>
</dbReference>
<dbReference type="InterPro" id="IPR000644">
    <property type="entry name" value="CBS_dom"/>
</dbReference>
<dbReference type="InterPro" id="IPR046342">
    <property type="entry name" value="CBS_dom_sf"/>
</dbReference>
<dbReference type="InterPro" id="IPR016711">
    <property type="entry name" value="Ssd23"/>
</dbReference>
<dbReference type="PANTHER" id="PTHR13780">
    <property type="entry name" value="AMP-ACTIVATED PROTEIN KINASE, GAMMA REGULATORY SUBUNIT"/>
    <property type="match status" value="1"/>
</dbReference>
<dbReference type="PANTHER" id="PTHR13780:SF36">
    <property type="entry name" value="CBS DOMAIN-CONTAINING PROTEIN"/>
    <property type="match status" value="1"/>
</dbReference>
<dbReference type="Pfam" id="PF00571">
    <property type="entry name" value="CBS"/>
    <property type="match status" value="1"/>
</dbReference>
<dbReference type="PIRSF" id="PIRSF018148">
    <property type="entry name" value="UCP018148_CBS_YBR214w"/>
    <property type="match status" value="1"/>
</dbReference>
<dbReference type="SMART" id="SM00116">
    <property type="entry name" value="CBS"/>
    <property type="match status" value="2"/>
</dbReference>
<dbReference type="SUPFAM" id="SSF54631">
    <property type="entry name" value="CBS-domain pair"/>
    <property type="match status" value="2"/>
</dbReference>
<dbReference type="PROSITE" id="PS51371">
    <property type="entry name" value="CBS"/>
    <property type="match status" value="3"/>
</dbReference>
<gene>
    <name type="primary">SDS23</name>
    <name type="ordered locus">YGL056C</name>
</gene>
<feature type="chain" id="PRO_0000202767" description="Protein SDS23">
    <location>
        <begin position="1"/>
        <end position="527"/>
    </location>
</feature>
<feature type="domain" description="CBS 1" evidence="1">
    <location>
        <begin position="101"/>
        <end position="162"/>
    </location>
</feature>
<feature type="domain" description="CBS 2" evidence="1">
    <location>
        <begin position="185"/>
        <end position="243"/>
    </location>
</feature>
<feature type="domain" description="CBS 3" evidence="1">
    <location>
        <begin position="272"/>
        <end position="330"/>
    </location>
</feature>
<feature type="domain" description="CBS 4" evidence="1">
    <location>
        <begin position="335"/>
        <end position="391"/>
    </location>
</feature>
<feature type="region of interest" description="Disordered" evidence="2">
    <location>
        <begin position="1"/>
        <end position="75"/>
    </location>
</feature>
<feature type="region of interest" description="Disordered" evidence="2">
    <location>
        <begin position="385"/>
        <end position="481"/>
    </location>
</feature>
<feature type="compositionally biased region" description="Polar residues" evidence="2">
    <location>
        <begin position="21"/>
        <end position="31"/>
    </location>
</feature>
<feature type="compositionally biased region" description="Basic and acidic residues" evidence="2">
    <location>
        <begin position="32"/>
        <end position="48"/>
    </location>
</feature>
<feature type="compositionally biased region" description="Low complexity" evidence="2">
    <location>
        <begin position="52"/>
        <end position="61"/>
    </location>
</feature>
<feature type="compositionally biased region" description="Low complexity" evidence="2">
    <location>
        <begin position="391"/>
        <end position="417"/>
    </location>
</feature>
<feature type="compositionally biased region" description="Polar residues" evidence="2">
    <location>
        <begin position="418"/>
        <end position="449"/>
    </location>
</feature>
<feature type="compositionally biased region" description="Low complexity" evidence="2">
    <location>
        <begin position="450"/>
        <end position="462"/>
    </location>
</feature>
<feature type="modified residue" description="Phosphoserine" evidence="10">
    <location>
        <position position="9"/>
    </location>
</feature>
<feature type="modified residue" description="Phosphoserine" evidence="7 9">
    <location>
        <position position="42"/>
    </location>
</feature>
<feature type="modified residue" description="Phosphoserine" evidence="7">
    <location>
        <position position="46"/>
    </location>
</feature>
<feature type="modified residue" description="Phosphoserine" evidence="8 9">
    <location>
        <position position="430"/>
    </location>
</feature>
<feature type="sequence conflict" description="In Ref. 1 and 2; CAA96758/CAA96759." evidence="6" ref="1 2">
    <original>G</original>
    <variation>A</variation>
    <location>
        <position position="180"/>
    </location>
</feature>
<proteinExistence type="evidence at protein level"/>
<evidence type="ECO:0000255" key="1">
    <source>
        <dbReference type="PROSITE-ProRule" id="PRU00703"/>
    </source>
</evidence>
<evidence type="ECO:0000256" key="2">
    <source>
        <dbReference type="SAM" id="MobiDB-lite"/>
    </source>
</evidence>
<evidence type="ECO:0000269" key="3">
    <source>
    </source>
</evidence>
<evidence type="ECO:0000269" key="4">
    <source>
    </source>
</evidence>
<evidence type="ECO:0000269" key="5">
    <source>
    </source>
</evidence>
<evidence type="ECO:0000305" key="6"/>
<evidence type="ECO:0007744" key="7">
    <source>
    </source>
</evidence>
<evidence type="ECO:0007744" key="8">
    <source>
    </source>
</evidence>
<evidence type="ECO:0007744" key="9">
    <source>
    </source>
</evidence>
<evidence type="ECO:0007744" key="10">
    <source>
    </source>
</evidence>
<reference key="1">
    <citation type="journal article" date="1997" name="Yeast">
        <title>The characterization of two new clusters of duplicated genes suggests a 'Lego' organization of the yeast Saccharomyces cerevisiae chromosomes.</title>
        <authorList>
            <person name="Feuermann M."/>
            <person name="de Montigny J."/>
            <person name="Potier S."/>
            <person name="Souciet J.-L."/>
        </authorList>
    </citation>
    <scope>NUCLEOTIDE SEQUENCE [GENOMIC DNA]</scope>
    <source>
        <strain>ATCC 204508 / S288c</strain>
    </source>
</reference>
<reference key="2">
    <citation type="journal article" date="1997" name="Nature">
        <title>The nucleotide sequence of Saccharomyces cerevisiae chromosome VII.</title>
        <authorList>
            <person name="Tettelin H."/>
            <person name="Agostoni-Carbone M.L."/>
            <person name="Albermann K."/>
            <person name="Albers M."/>
            <person name="Arroyo J."/>
            <person name="Backes U."/>
            <person name="Barreiros T."/>
            <person name="Bertani I."/>
            <person name="Bjourson A.J."/>
            <person name="Brueckner M."/>
            <person name="Bruschi C.V."/>
            <person name="Carignani G."/>
            <person name="Castagnoli L."/>
            <person name="Cerdan E."/>
            <person name="Clemente M.L."/>
            <person name="Coblenz A."/>
            <person name="Coglievina M."/>
            <person name="Coissac E."/>
            <person name="Defoor E."/>
            <person name="Del Bino S."/>
            <person name="Delius H."/>
            <person name="Delneri D."/>
            <person name="de Wergifosse P."/>
            <person name="Dujon B."/>
            <person name="Durand P."/>
            <person name="Entian K.-D."/>
            <person name="Eraso P."/>
            <person name="Escribano V."/>
            <person name="Fabiani L."/>
            <person name="Fartmann B."/>
            <person name="Feroli F."/>
            <person name="Feuermann M."/>
            <person name="Frontali L."/>
            <person name="Garcia-Gonzalez M."/>
            <person name="Garcia-Saez M.I."/>
            <person name="Goffeau A."/>
            <person name="Guerreiro P."/>
            <person name="Hani J."/>
            <person name="Hansen M."/>
            <person name="Hebling U."/>
            <person name="Hernandez K."/>
            <person name="Heumann K."/>
            <person name="Hilger F."/>
            <person name="Hofmann B."/>
            <person name="Indge K.J."/>
            <person name="James C.M."/>
            <person name="Klima R."/>
            <person name="Koetter P."/>
            <person name="Kramer B."/>
            <person name="Kramer W."/>
            <person name="Lauquin G."/>
            <person name="Leuther H."/>
            <person name="Louis E.J."/>
            <person name="Maillier E."/>
            <person name="Marconi A."/>
            <person name="Martegani E."/>
            <person name="Mazon M.J."/>
            <person name="Mazzoni C."/>
            <person name="McReynolds A.D.K."/>
            <person name="Melchioretto P."/>
            <person name="Mewes H.-W."/>
            <person name="Minenkova O."/>
            <person name="Mueller-Auer S."/>
            <person name="Nawrocki A."/>
            <person name="Netter P."/>
            <person name="Neu R."/>
            <person name="Nombela C."/>
            <person name="Oliver S.G."/>
            <person name="Panzeri L."/>
            <person name="Paoluzi S."/>
            <person name="Plevani P."/>
            <person name="Portetelle D."/>
            <person name="Portillo F."/>
            <person name="Potier S."/>
            <person name="Purnelle B."/>
            <person name="Rieger M."/>
            <person name="Riles L."/>
            <person name="Rinaldi T."/>
            <person name="Robben J."/>
            <person name="Rodrigues-Pousada C."/>
            <person name="Rodriguez-Belmonte E."/>
            <person name="Rodriguez-Torres A.M."/>
            <person name="Rose M."/>
            <person name="Ruzzi M."/>
            <person name="Saliola M."/>
            <person name="Sanchez-Perez M."/>
            <person name="Schaefer B."/>
            <person name="Schaefer M."/>
            <person name="Scharfe M."/>
            <person name="Schmidheini T."/>
            <person name="Schreer A."/>
            <person name="Skala J."/>
            <person name="Souciet J.-L."/>
            <person name="Steensma H.Y."/>
            <person name="Talla E."/>
            <person name="Thierry A."/>
            <person name="Vandenbol M."/>
            <person name="van der Aart Q.J.M."/>
            <person name="Van Dyck L."/>
            <person name="Vanoni M."/>
            <person name="Verhasselt P."/>
            <person name="Voet M."/>
            <person name="Volckaert G."/>
            <person name="Wambutt R."/>
            <person name="Watson M.D."/>
            <person name="Weber N."/>
            <person name="Wedler E."/>
            <person name="Wedler H."/>
            <person name="Wipfli P."/>
            <person name="Wolf K."/>
            <person name="Wright L.F."/>
            <person name="Zaccaria P."/>
            <person name="Zimmermann M."/>
            <person name="Zollner A."/>
            <person name="Kleine K."/>
        </authorList>
    </citation>
    <scope>NUCLEOTIDE SEQUENCE [LARGE SCALE GENOMIC DNA]</scope>
    <source>
        <strain>ATCC 204508 / S288c</strain>
    </source>
</reference>
<reference key="3">
    <citation type="journal article" date="2014" name="G3 (Bethesda)">
        <title>The reference genome sequence of Saccharomyces cerevisiae: Then and now.</title>
        <authorList>
            <person name="Engel S.R."/>
            <person name="Dietrich F.S."/>
            <person name="Fisk D.G."/>
            <person name="Binkley G."/>
            <person name="Balakrishnan R."/>
            <person name="Costanzo M.C."/>
            <person name="Dwight S.S."/>
            <person name="Hitz B.C."/>
            <person name="Karra K."/>
            <person name="Nash R.S."/>
            <person name="Weng S."/>
            <person name="Wong E.D."/>
            <person name="Lloyd P."/>
            <person name="Skrzypek M.S."/>
            <person name="Miyasato S.R."/>
            <person name="Simison M."/>
            <person name="Cherry J.M."/>
        </authorList>
    </citation>
    <scope>GENOME REANNOTATION</scope>
    <scope>SEQUENCE REVISION TO 180</scope>
    <source>
        <strain>ATCC 204508 / S288c</strain>
    </source>
</reference>
<reference key="4">
    <citation type="journal article" date="2007" name="Genome Res.">
        <title>Approaching a complete repository of sequence-verified protein-encoding clones for Saccharomyces cerevisiae.</title>
        <authorList>
            <person name="Hu Y."/>
            <person name="Rolfs A."/>
            <person name="Bhullar B."/>
            <person name="Murthy T.V.S."/>
            <person name="Zhu C."/>
            <person name="Berger M.F."/>
            <person name="Camargo A.A."/>
            <person name="Kelley F."/>
            <person name="McCarron S."/>
            <person name="Jepson D."/>
            <person name="Richardson A."/>
            <person name="Raphael J."/>
            <person name="Moreira D."/>
            <person name="Taycher E."/>
            <person name="Zuo D."/>
            <person name="Mohr S."/>
            <person name="Kane M.F."/>
            <person name="Williamson J."/>
            <person name="Simpson A.J.G."/>
            <person name="Bulyk M.L."/>
            <person name="Harlow E."/>
            <person name="Marsischky G."/>
            <person name="Kolodner R.D."/>
            <person name="LaBaer J."/>
        </authorList>
    </citation>
    <scope>NUCLEOTIDE SEQUENCE [GENOMIC DNA]</scope>
    <source>
        <strain>ATCC 204508 / S288c</strain>
    </source>
</reference>
<reference key="5">
    <citation type="journal article" date="2003" name="Nature">
        <title>Global analysis of protein localization in budding yeast.</title>
        <authorList>
            <person name="Huh W.-K."/>
            <person name="Falvo J.V."/>
            <person name="Gerke L.C."/>
            <person name="Carroll A.S."/>
            <person name="Howson R.W."/>
            <person name="Weissman J.S."/>
            <person name="O'Shea E.K."/>
        </authorList>
    </citation>
    <scope>SUBCELLULAR LOCATION [LARGE SCALE ANALYSIS]</scope>
</reference>
<reference key="6">
    <citation type="journal article" date="2003" name="Nature">
        <title>Global analysis of protein expression in yeast.</title>
        <authorList>
            <person name="Ghaemmaghami S."/>
            <person name="Huh W.-K."/>
            <person name="Bower K."/>
            <person name="Howson R.W."/>
            <person name="Belle A."/>
            <person name="Dephoure N."/>
            <person name="O'Shea E.K."/>
            <person name="Weissman J.S."/>
        </authorList>
    </citation>
    <scope>LEVEL OF PROTEIN EXPRESSION [LARGE SCALE ANALYSIS]</scope>
</reference>
<reference key="7">
    <citation type="journal article" date="2005" name="Biosci. Biotechnol. Biochem.">
        <title>Functional conservation between fission yeast moc1/sds23 and its two orthologs, budding yeast SDS23 and SDS24, and phenotypic differences in their disruptants.</title>
        <authorList>
            <person name="Goldar M.M."/>
            <person name="Nishie T."/>
            <person name="Ishikura Y."/>
            <person name="Fukuda T."/>
            <person name="Takegawa K."/>
            <person name="Kawamukai M."/>
        </authorList>
    </citation>
    <scope>FUNCTION</scope>
</reference>
<reference key="8">
    <citation type="journal article" date="2007" name="J. Proteome Res.">
        <title>Large-scale phosphorylation analysis of alpha-factor-arrested Saccharomyces cerevisiae.</title>
        <authorList>
            <person name="Li X."/>
            <person name="Gerber S.A."/>
            <person name="Rudner A.D."/>
            <person name="Beausoleil S.A."/>
            <person name="Haas W."/>
            <person name="Villen J."/>
            <person name="Elias J.E."/>
            <person name="Gygi S.P."/>
        </authorList>
    </citation>
    <scope>PHOSPHORYLATION [LARGE SCALE ANALYSIS] AT SER-430</scope>
    <scope>IDENTIFICATION BY MASS SPECTROMETRY [LARGE SCALE ANALYSIS]</scope>
    <source>
        <strain>ADR376</strain>
    </source>
</reference>
<reference key="9">
    <citation type="journal article" date="2007" name="Proc. Natl. Acad. Sci. U.S.A.">
        <title>Analysis of phosphorylation sites on proteins from Saccharomyces cerevisiae by electron transfer dissociation (ETD) mass spectrometry.</title>
        <authorList>
            <person name="Chi A."/>
            <person name="Huttenhower C."/>
            <person name="Geer L.Y."/>
            <person name="Coon J.J."/>
            <person name="Syka J.E.P."/>
            <person name="Bai D.L."/>
            <person name="Shabanowitz J."/>
            <person name="Burke D.J."/>
            <person name="Troyanskaya O.G."/>
            <person name="Hunt D.F."/>
        </authorList>
    </citation>
    <scope>PHOSPHORYLATION [LARGE SCALE ANALYSIS] AT SER-42 AND SER-46</scope>
    <scope>IDENTIFICATION BY MASS SPECTROMETRY [LARGE SCALE ANALYSIS]</scope>
</reference>
<reference key="10">
    <citation type="journal article" date="2008" name="Mol. Cell. Proteomics">
        <title>A multidimensional chromatography technology for in-depth phosphoproteome analysis.</title>
        <authorList>
            <person name="Albuquerque C.P."/>
            <person name="Smolka M.B."/>
            <person name="Payne S.H."/>
            <person name="Bafna V."/>
            <person name="Eng J."/>
            <person name="Zhou H."/>
        </authorList>
    </citation>
    <scope>PHOSPHORYLATION [LARGE SCALE ANALYSIS] AT SER-42 AND SER-430</scope>
    <scope>IDENTIFICATION BY MASS SPECTROMETRY [LARGE SCALE ANALYSIS]</scope>
</reference>
<reference key="11">
    <citation type="journal article" date="2009" name="Science">
        <title>Global analysis of Cdk1 substrate phosphorylation sites provides insights into evolution.</title>
        <authorList>
            <person name="Holt L.J."/>
            <person name="Tuch B.B."/>
            <person name="Villen J."/>
            <person name="Johnson A.D."/>
            <person name="Gygi S.P."/>
            <person name="Morgan D.O."/>
        </authorList>
    </citation>
    <scope>PHOSPHORYLATION [LARGE SCALE ANALYSIS] AT SER-9</scope>
    <scope>IDENTIFICATION BY MASS SPECTROMETRY [LARGE SCALE ANALYSIS]</scope>
</reference>
<sequence length="527" mass="58098">MPQNTRHTSIVEMLSTPPQLPNSTDLNSLSEQTDKNTEANKSDTESLHKSISKSSSSSSLSTLDNTEYSNNNGNSLSTLNSQNLLSVHRQEWQHTPLSNLVEQNKLIFIRGSISVEEAFNTLVKHQLTSLPVENFPGDMNCLTFDYNDLNAYLLLVLNRIKVSNDKITSDCQNGKSVPVGEIVKLTPKNPFYKLPETENLSTVIGILGSGVHRVAITNVEMTQIKGILSQRRLIKYLWENARSFPNLKPLLDSSLEELNIGVLNAARDKPTFKQSRVISIQGDEHLIMALHKMYVERISSIAVVDPQGNLIGNISVTDVKHVTRTSQYPLLHNTCRHFVSVILNLRGLETGKDSFPIFHVYPTSSLARTFAKLVATKSHRLWIVQPNDNQPTASSEKSSSPSPSTPPVTTLPSLASSYHSNTQSSRMANSPVLKSSDTSNNKINVNINLSGPSPSQPQSPSATMPPPQSPSNCPASPTPAHFEKEYRTGKLIGVVSLTDILSVLARKQTHHKEIDPQMARKQRGHIG</sequence>
<comment type="function">
    <text evidence="5">Involved in DNA replication and cell separation during budding.</text>
</comment>
<comment type="subcellular location">
    <subcellularLocation>
        <location evidence="3">Cytoplasm</location>
    </subcellularLocation>
    <subcellularLocation>
        <location evidence="3">Nucleus</location>
    </subcellularLocation>
</comment>
<comment type="miscellaneous">
    <text evidence="4">Present with 21200 molecules/cell in log phase SD medium.</text>
</comment>
<comment type="similarity">
    <text evidence="6">Belongs to the SDS23 family.</text>
</comment>
<accession>P53172</accession>
<accession>D6VU85</accession>
<accession>Q6B1R7</accession>
<keyword id="KW-0129">CBS domain</keyword>
<keyword id="KW-0963">Cytoplasm</keyword>
<keyword id="KW-0539">Nucleus</keyword>
<keyword id="KW-0597">Phosphoprotein</keyword>
<keyword id="KW-1185">Reference proteome</keyword>
<keyword id="KW-0677">Repeat</keyword>
<protein>
    <recommendedName>
        <fullName>Protein SDS23</fullName>
    </recommendedName>
</protein>
<organism>
    <name type="scientific">Saccharomyces cerevisiae (strain ATCC 204508 / S288c)</name>
    <name type="common">Baker's yeast</name>
    <dbReference type="NCBI Taxonomy" id="559292"/>
    <lineage>
        <taxon>Eukaryota</taxon>
        <taxon>Fungi</taxon>
        <taxon>Dikarya</taxon>
        <taxon>Ascomycota</taxon>
        <taxon>Saccharomycotina</taxon>
        <taxon>Saccharomycetes</taxon>
        <taxon>Saccharomycetales</taxon>
        <taxon>Saccharomycetaceae</taxon>
        <taxon>Saccharomyces</taxon>
    </lineage>
</organism>
<name>SDS23_YEAST</name>